<gene>
    <name evidence="4" type="primary">HAM1</name>
    <name evidence="6" type="ORF">CNAG_02129</name>
</gene>
<reference evidence="7" key="1">
    <citation type="journal article" date="2014" name="PLoS Genet.">
        <title>Analysis of the genome and transcriptome of Cryptococcus neoformans var. grubii reveals complex RNA expression and microevolution leading to virulence attenuation.</title>
        <authorList>
            <person name="Janbon G."/>
            <person name="Ormerod K.L."/>
            <person name="Paulet D."/>
            <person name="Byrnes E.J. III"/>
            <person name="Yadav V."/>
            <person name="Chatterjee G."/>
            <person name="Mullapudi N."/>
            <person name="Hon C.-C."/>
            <person name="Billmyre R.B."/>
            <person name="Brunel F."/>
            <person name="Bahn Y.-S."/>
            <person name="Chen W."/>
            <person name="Chen Y."/>
            <person name="Chow E.W.L."/>
            <person name="Coppee J.-Y."/>
            <person name="Floyd-Averette A."/>
            <person name="Gaillardin C."/>
            <person name="Gerik K.J."/>
            <person name="Goldberg J."/>
            <person name="Gonzalez-Hilarion S."/>
            <person name="Gujja S."/>
            <person name="Hamlin J.L."/>
            <person name="Hsueh Y.-P."/>
            <person name="Ianiri G."/>
            <person name="Jones S."/>
            <person name="Kodira C.D."/>
            <person name="Kozubowski L."/>
            <person name="Lam W."/>
            <person name="Marra M."/>
            <person name="Mesner L.D."/>
            <person name="Mieczkowski P.A."/>
            <person name="Moyrand F."/>
            <person name="Nielsen K."/>
            <person name="Proux C."/>
            <person name="Rossignol T."/>
            <person name="Schein J.E."/>
            <person name="Sun S."/>
            <person name="Wollschlaeger C."/>
            <person name="Wood I.A."/>
            <person name="Zeng Q."/>
            <person name="Neuveglise C."/>
            <person name="Newlon C.S."/>
            <person name="Perfect J.R."/>
            <person name="Lodge J.K."/>
            <person name="Idnurm A."/>
            <person name="Stajich J.E."/>
            <person name="Kronstad J.W."/>
            <person name="Sanyal K."/>
            <person name="Heitman J."/>
            <person name="Fraser J.A."/>
            <person name="Cuomo C.A."/>
            <person name="Dietrich F.S."/>
        </authorList>
    </citation>
    <scope>NUCLEOTIDE SEQUENCE [LARGE SCALE GENOMIC DNA]</scope>
    <source>
        <strain>H99 / ATCC 208821 / CBS 10515 / FGSC 9487</strain>
    </source>
</reference>
<reference evidence="5" key="2">
    <citation type="journal article" date="2024" name="Microbiol. Spectr.">
        <title>Phenotypic characterization of HAM1, a novel mating regulator of the fungal pathogen Cryptococcus neoformans.</title>
        <authorList>
            <person name="Arsenault Yee E."/>
            <person name="Ross R.L."/>
            <person name="Santiago-Tirado F.H."/>
        </authorList>
    </citation>
    <scope>FUNCTION</scope>
    <scope>INDUCTION</scope>
    <scope>PALMITOYLATION</scope>
    <scope>DISRUPTION PHENOTYPE</scope>
</reference>
<feature type="chain" id="PRO_0000461167" description="Putative cell signaling protein HAM1">
    <location>
        <begin position="1"/>
        <end position="908"/>
    </location>
</feature>
<feature type="region of interest" description="Disordered" evidence="2">
    <location>
        <begin position="1"/>
        <end position="24"/>
    </location>
</feature>
<feature type="region of interest" description="Disordered" evidence="2">
    <location>
        <begin position="177"/>
        <end position="359"/>
    </location>
</feature>
<feature type="coiled-coil region" evidence="1">
    <location>
        <begin position="255"/>
        <end position="282"/>
    </location>
</feature>
<feature type="compositionally biased region" description="Basic and acidic residues" evidence="2">
    <location>
        <begin position="179"/>
        <end position="192"/>
    </location>
</feature>
<feature type="compositionally biased region" description="Basic and acidic residues" evidence="2">
    <location>
        <begin position="231"/>
        <end position="247"/>
    </location>
</feature>
<feature type="compositionally biased region" description="Basic and acidic residues" evidence="2">
    <location>
        <begin position="261"/>
        <end position="283"/>
    </location>
</feature>
<feature type="compositionally biased region" description="Basic and acidic residues" evidence="2">
    <location>
        <begin position="306"/>
        <end position="321"/>
    </location>
</feature>
<feature type="compositionally biased region" description="Basic and acidic residues" evidence="2">
    <location>
        <begin position="338"/>
        <end position="359"/>
    </location>
</feature>
<sequence>MSVAATKSEISHNPGKMSVTSAVSGEKVEGDVQSRMKLFGAIQAFRDGRMPDNEQIGSVLEYAIGHSPVDLQKLSPEGRVLIEDFRDTLETLRMIVHEKNSDELFQNAVWSSYHGDVSKAKQDGVIPVSNEQAKQDGKTAASHIRVLITLFLTNSEARKLLKDFGIVGRDIFATAATKAADKSRPSQEKLDSVDQEAPSHEWIGADGKRLGPNETPDIQIKGPGGTQARYHPRDDPRDAQLVDDKGKTRSAGEAYNQAQEAKSDAQSKAQDLKSSARDYKETGKQQARSHAQDVAGNRDPNASLSEQKEQVKGAAYDKRDAANAQADQNLPDPNDEGNQEKARGKAAALRDRIPEEHRQKAADYIQKSKNFVNDELPEERRDQFIYRLKKVVVECQGHKDYQEAMTWLLDTLENYRGHAKHVANKGTESAQTVANDPAVGDSTIQFRTLLERFANGKSLDNVFSALDQIYTDVQNDSELREWFTTFNDYMHRVLLEPGYILDEDSDREARQLRESGRRFFQDKYKAHQELLFDELQVWLTAFGEDPLNVRLGDDIKRFCKDLLFNHEGNLTFKPKLWNDVRQVLLPMLLKQVSYVPIPRAEYSDNSIDLVIEDLILSGPNLFPNLVHIESFNSFSFSPYPKLNKTMDNQHHKFRLSLSQIQADIRDVAFAFRRKSGWPKLSDHGLADVVLAGKGISVDVELESIENRRDTVFKTNFIHVNIDTLKFSIRNSKHDLLYKFIKSTATGLIKRAITAAVQNAMHTALGHLDEQLVEVRNRVDEAKQSDETTRTQALKDLYSRKKESAQEKKAAADEKTGTFKIITDRDSQLNPELTHDGGKSWAKRAFKVEDAARTGKEWRSPAFNLIDPAHPAVTGQHHPAVQNADVESEKLKQRAEAAAPGVAAGTKRM</sequence>
<keyword id="KW-0175">Coiled coil</keyword>
<keyword id="KW-0449">Lipoprotein</keyword>
<keyword id="KW-0564">Palmitate</keyword>
<dbReference type="EMBL" id="CP003825">
    <property type="protein sequence ID" value="AFR95690.1"/>
    <property type="molecule type" value="Genomic_DNA"/>
</dbReference>
<dbReference type="RefSeq" id="XP_012049967.1">
    <property type="nucleotide sequence ID" value="XM_012194577.1"/>
</dbReference>
<dbReference type="SwissPalm" id="J9VVE7"/>
<dbReference type="GeneID" id="23885786"/>
<dbReference type="KEGG" id="cng:CNAG_02129"/>
<dbReference type="VEuPathDB" id="FungiDB:CNAG_02129"/>
<dbReference type="HOGENOM" id="CLU_007183_0_0_1"/>
<dbReference type="OrthoDB" id="3518at5206"/>
<dbReference type="Proteomes" id="UP000010091">
    <property type="component" value="Chromosome 6"/>
</dbReference>
<dbReference type="Gene3D" id="3.15.10.10">
    <property type="entry name" value="Bactericidal permeability-increasing protein, domain 1"/>
    <property type="match status" value="1"/>
</dbReference>
<dbReference type="InterPro" id="IPR027842">
    <property type="entry name" value="HAM1-like_C"/>
</dbReference>
<dbReference type="InterPro" id="IPR045967">
    <property type="entry name" value="HAM1-like_N"/>
</dbReference>
<dbReference type="PANTHER" id="PTHR31138">
    <property type="entry name" value="CHROMOSOME 19, WHOLE GENOME SHOTGUN SEQUENCE"/>
    <property type="match status" value="1"/>
</dbReference>
<dbReference type="PANTHER" id="PTHR31138:SF1">
    <property type="entry name" value="PDZ DOMAIN-CONTAINING PROTEIN"/>
    <property type="match status" value="1"/>
</dbReference>
<dbReference type="Pfam" id="PF14613">
    <property type="entry name" value="HAM1_C"/>
    <property type="match status" value="1"/>
</dbReference>
<dbReference type="Pfam" id="PF19343">
    <property type="entry name" value="HAM1_N"/>
    <property type="match status" value="1"/>
</dbReference>
<name>HAMP_CRYNH</name>
<accession>J9VVE7</accession>
<protein>
    <recommendedName>
        <fullName evidence="5">Putative cell signaling protein HAM1</fullName>
    </recommendedName>
    <alternativeName>
        <fullName evidence="4">Hyphal anastomosis protein 1</fullName>
    </alternativeName>
</protein>
<proteinExistence type="evidence at protein level"/>
<comment type="function">
    <text evidence="3">May act as a negative regulator of mating during vegetative growth.</text>
</comment>
<comment type="induction">
    <text evidence="3">Repressed during mating.</text>
</comment>
<comment type="PTM">
    <text evidence="3">Palmitoylated.</text>
</comment>
<comment type="disruption phenotype">
    <text evidence="3">Increases mating efficiency; progeny exhibit increased growth as hyphae (PubMed:38842336). Leads to defective capsule attachment and higher amounts of exopolysaccharide shedding and biofilm production (PubMed:38842336). Does not affect virulence in a G.mellonella model of infection (PubMed:38842336).</text>
</comment>
<organism evidence="7">
    <name type="scientific">Cryptococcus neoformans var. grubii serotype A (strain H99 / ATCC 208821 / CBS 10515 / FGSC 9487)</name>
    <name type="common">Filobasidiella neoformans var. grubii</name>
    <dbReference type="NCBI Taxonomy" id="235443"/>
    <lineage>
        <taxon>Eukaryota</taxon>
        <taxon>Fungi</taxon>
        <taxon>Dikarya</taxon>
        <taxon>Basidiomycota</taxon>
        <taxon>Agaricomycotina</taxon>
        <taxon>Tremellomycetes</taxon>
        <taxon>Tremellales</taxon>
        <taxon>Cryptococcaceae</taxon>
        <taxon>Cryptococcus</taxon>
        <taxon>Cryptococcus neoformans species complex</taxon>
    </lineage>
</organism>
<evidence type="ECO:0000255" key="1"/>
<evidence type="ECO:0000256" key="2">
    <source>
        <dbReference type="SAM" id="MobiDB-lite"/>
    </source>
</evidence>
<evidence type="ECO:0000269" key="3">
    <source>
    </source>
</evidence>
<evidence type="ECO:0000303" key="4">
    <source>
    </source>
</evidence>
<evidence type="ECO:0000305" key="5"/>
<evidence type="ECO:0000312" key="6">
    <source>
        <dbReference type="EMBL" id="AFR95690.1"/>
    </source>
</evidence>
<evidence type="ECO:0000312" key="7">
    <source>
        <dbReference type="Proteomes" id="UP000010091"/>
    </source>
</evidence>